<reference key="1">
    <citation type="journal article" date="2001" name="Nature">
        <title>Genome sequence of Yersinia pestis, the causative agent of plague.</title>
        <authorList>
            <person name="Parkhill J."/>
            <person name="Wren B.W."/>
            <person name="Thomson N.R."/>
            <person name="Titball R.W."/>
            <person name="Holden M.T.G."/>
            <person name="Prentice M.B."/>
            <person name="Sebaihia M."/>
            <person name="James K.D."/>
            <person name="Churcher C.M."/>
            <person name="Mungall K.L."/>
            <person name="Baker S."/>
            <person name="Basham D."/>
            <person name="Bentley S.D."/>
            <person name="Brooks K."/>
            <person name="Cerdeno-Tarraga A.-M."/>
            <person name="Chillingworth T."/>
            <person name="Cronin A."/>
            <person name="Davies R.M."/>
            <person name="Davis P."/>
            <person name="Dougan G."/>
            <person name="Feltwell T."/>
            <person name="Hamlin N."/>
            <person name="Holroyd S."/>
            <person name="Jagels K."/>
            <person name="Karlyshev A.V."/>
            <person name="Leather S."/>
            <person name="Moule S."/>
            <person name="Oyston P.C.F."/>
            <person name="Quail M.A."/>
            <person name="Rutherford K.M."/>
            <person name="Simmonds M."/>
            <person name="Skelton J."/>
            <person name="Stevens K."/>
            <person name="Whitehead S."/>
            <person name="Barrell B.G."/>
        </authorList>
    </citation>
    <scope>NUCLEOTIDE SEQUENCE [LARGE SCALE GENOMIC DNA]</scope>
    <source>
        <strain>CO-92 / Biovar Orientalis</strain>
    </source>
</reference>
<reference key="2">
    <citation type="journal article" date="2002" name="J. Bacteriol.">
        <title>Genome sequence of Yersinia pestis KIM.</title>
        <authorList>
            <person name="Deng W."/>
            <person name="Burland V."/>
            <person name="Plunkett G. III"/>
            <person name="Boutin A."/>
            <person name="Mayhew G.F."/>
            <person name="Liss P."/>
            <person name="Perna N.T."/>
            <person name="Rose D.J."/>
            <person name="Mau B."/>
            <person name="Zhou S."/>
            <person name="Schwartz D.C."/>
            <person name="Fetherston J.D."/>
            <person name="Lindler L.E."/>
            <person name="Brubaker R.R."/>
            <person name="Plano G.V."/>
            <person name="Straley S.C."/>
            <person name="McDonough K.A."/>
            <person name="Nilles M.L."/>
            <person name="Matson J.S."/>
            <person name="Blattner F.R."/>
            <person name="Perry R.D."/>
        </authorList>
    </citation>
    <scope>NUCLEOTIDE SEQUENCE [LARGE SCALE GENOMIC DNA]</scope>
    <source>
        <strain>KIM10+ / Biovar Mediaevalis</strain>
    </source>
</reference>
<reference key="3">
    <citation type="journal article" date="2004" name="DNA Res.">
        <title>Complete genome sequence of Yersinia pestis strain 91001, an isolate avirulent to humans.</title>
        <authorList>
            <person name="Song Y."/>
            <person name="Tong Z."/>
            <person name="Wang J."/>
            <person name="Wang L."/>
            <person name="Guo Z."/>
            <person name="Han Y."/>
            <person name="Zhang J."/>
            <person name="Pei D."/>
            <person name="Zhou D."/>
            <person name="Qin H."/>
            <person name="Pang X."/>
            <person name="Han Y."/>
            <person name="Zhai J."/>
            <person name="Li M."/>
            <person name="Cui B."/>
            <person name="Qi Z."/>
            <person name="Jin L."/>
            <person name="Dai R."/>
            <person name="Chen F."/>
            <person name="Li S."/>
            <person name="Ye C."/>
            <person name="Du Z."/>
            <person name="Lin W."/>
            <person name="Wang J."/>
            <person name="Yu J."/>
            <person name="Yang H."/>
            <person name="Wang J."/>
            <person name="Huang P."/>
            <person name="Yang R."/>
        </authorList>
    </citation>
    <scope>NUCLEOTIDE SEQUENCE [LARGE SCALE GENOMIC DNA]</scope>
    <source>
        <strain>91001 / Biovar Mediaevalis</strain>
    </source>
</reference>
<name>GPDA_YERPE</name>
<keyword id="KW-0963">Cytoplasm</keyword>
<keyword id="KW-0444">Lipid biosynthesis</keyword>
<keyword id="KW-0443">Lipid metabolism</keyword>
<keyword id="KW-0520">NAD</keyword>
<keyword id="KW-0521">NADP</keyword>
<keyword id="KW-0547">Nucleotide-binding</keyword>
<keyword id="KW-0560">Oxidoreductase</keyword>
<keyword id="KW-0594">Phospholipid biosynthesis</keyword>
<keyword id="KW-1208">Phospholipid metabolism</keyword>
<keyword id="KW-1185">Reference proteome</keyword>
<protein>
    <recommendedName>
        <fullName evidence="1">Glycerol-3-phosphate dehydrogenase [NAD(P)+]</fullName>
        <ecNumber evidence="1">1.1.1.94</ecNumber>
    </recommendedName>
    <alternativeName>
        <fullName evidence="1">NAD(P)(+)-dependent glycerol-3-phosphate dehydrogenase</fullName>
    </alternativeName>
    <alternativeName>
        <fullName evidence="1">NAD(P)H-dependent dihydroxyacetone-phosphate reductase</fullName>
    </alternativeName>
</protein>
<gene>
    <name evidence="1" type="primary">gpsA</name>
    <name type="ordered locus">YPO0068</name>
    <name type="ordered locus">y0073</name>
    <name type="ordered locus">YP_0068</name>
</gene>
<proteinExistence type="inferred from homology"/>
<comment type="function">
    <text evidence="1">Catalyzes the reduction of the glycolytic intermediate dihydroxyacetone phosphate (DHAP) to sn-glycerol 3-phosphate (G3P), the key precursor for phospholipid synthesis.</text>
</comment>
<comment type="catalytic activity">
    <reaction evidence="1">
        <text>sn-glycerol 3-phosphate + NAD(+) = dihydroxyacetone phosphate + NADH + H(+)</text>
        <dbReference type="Rhea" id="RHEA:11092"/>
        <dbReference type="ChEBI" id="CHEBI:15378"/>
        <dbReference type="ChEBI" id="CHEBI:57540"/>
        <dbReference type="ChEBI" id="CHEBI:57597"/>
        <dbReference type="ChEBI" id="CHEBI:57642"/>
        <dbReference type="ChEBI" id="CHEBI:57945"/>
        <dbReference type="EC" id="1.1.1.94"/>
    </reaction>
    <physiologicalReaction direction="right-to-left" evidence="1">
        <dbReference type="Rhea" id="RHEA:11094"/>
    </physiologicalReaction>
</comment>
<comment type="catalytic activity">
    <reaction evidence="1">
        <text>sn-glycerol 3-phosphate + NADP(+) = dihydroxyacetone phosphate + NADPH + H(+)</text>
        <dbReference type="Rhea" id="RHEA:11096"/>
        <dbReference type="ChEBI" id="CHEBI:15378"/>
        <dbReference type="ChEBI" id="CHEBI:57597"/>
        <dbReference type="ChEBI" id="CHEBI:57642"/>
        <dbReference type="ChEBI" id="CHEBI:57783"/>
        <dbReference type="ChEBI" id="CHEBI:58349"/>
        <dbReference type="EC" id="1.1.1.94"/>
    </reaction>
    <physiologicalReaction direction="right-to-left" evidence="1">
        <dbReference type="Rhea" id="RHEA:11098"/>
    </physiologicalReaction>
</comment>
<comment type="pathway">
    <text evidence="1">Membrane lipid metabolism; glycerophospholipid metabolism.</text>
</comment>
<comment type="subcellular location">
    <subcellularLocation>
        <location evidence="1">Cytoplasm</location>
    </subcellularLocation>
</comment>
<comment type="similarity">
    <text evidence="1">Belongs to the NAD-dependent glycerol-3-phosphate dehydrogenase family.</text>
</comment>
<dbReference type="EC" id="1.1.1.94" evidence="1"/>
<dbReference type="EMBL" id="AL590842">
    <property type="protein sequence ID" value="CAL18757.1"/>
    <property type="molecule type" value="Genomic_DNA"/>
</dbReference>
<dbReference type="EMBL" id="AE009952">
    <property type="protein sequence ID" value="AAM83668.1"/>
    <property type="molecule type" value="Genomic_DNA"/>
</dbReference>
<dbReference type="EMBL" id="AE017042">
    <property type="protein sequence ID" value="AAS60348.1"/>
    <property type="molecule type" value="Genomic_DNA"/>
</dbReference>
<dbReference type="PIR" id="AD0009">
    <property type="entry name" value="AD0009"/>
</dbReference>
<dbReference type="RefSeq" id="WP_002208975.1">
    <property type="nucleotide sequence ID" value="NZ_WUCM01000015.1"/>
</dbReference>
<dbReference type="RefSeq" id="YP_002345162.1">
    <property type="nucleotide sequence ID" value="NC_003143.1"/>
</dbReference>
<dbReference type="SMR" id="Q8ZJM6"/>
<dbReference type="IntAct" id="Q8ZJM6">
    <property type="interactions" value="1"/>
</dbReference>
<dbReference type="STRING" id="214092.YPO0068"/>
<dbReference type="PaxDb" id="214092-YPO0068"/>
<dbReference type="DNASU" id="1145020"/>
<dbReference type="EnsemblBacteria" id="AAS60348">
    <property type="protein sequence ID" value="AAS60348"/>
    <property type="gene ID" value="YP_0068"/>
</dbReference>
<dbReference type="GeneID" id="57974523"/>
<dbReference type="KEGG" id="ype:YPO0068"/>
<dbReference type="KEGG" id="ypk:y0073"/>
<dbReference type="KEGG" id="ypm:YP_0068"/>
<dbReference type="PATRIC" id="fig|214092.21.peg.291"/>
<dbReference type="eggNOG" id="COG0240">
    <property type="taxonomic scope" value="Bacteria"/>
</dbReference>
<dbReference type="HOGENOM" id="CLU_033449_0_2_6"/>
<dbReference type="OMA" id="NRMFGNM"/>
<dbReference type="OrthoDB" id="9812273at2"/>
<dbReference type="UniPathway" id="UPA00940"/>
<dbReference type="Proteomes" id="UP000000815">
    <property type="component" value="Chromosome"/>
</dbReference>
<dbReference type="Proteomes" id="UP000001019">
    <property type="component" value="Chromosome"/>
</dbReference>
<dbReference type="Proteomes" id="UP000002490">
    <property type="component" value="Chromosome"/>
</dbReference>
<dbReference type="GO" id="GO:0005829">
    <property type="term" value="C:cytosol"/>
    <property type="evidence" value="ECO:0000318"/>
    <property type="project" value="GO_Central"/>
</dbReference>
<dbReference type="GO" id="GO:0047952">
    <property type="term" value="F:glycerol-3-phosphate dehydrogenase [NAD(P)+] activity"/>
    <property type="evidence" value="ECO:0000318"/>
    <property type="project" value="GO_Central"/>
</dbReference>
<dbReference type="GO" id="GO:0051287">
    <property type="term" value="F:NAD binding"/>
    <property type="evidence" value="ECO:0007669"/>
    <property type="project" value="InterPro"/>
</dbReference>
<dbReference type="GO" id="GO:0005975">
    <property type="term" value="P:carbohydrate metabolic process"/>
    <property type="evidence" value="ECO:0007669"/>
    <property type="project" value="InterPro"/>
</dbReference>
<dbReference type="GO" id="GO:0046167">
    <property type="term" value="P:glycerol-3-phosphate biosynthetic process"/>
    <property type="evidence" value="ECO:0007669"/>
    <property type="project" value="UniProtKB-UniRule"/>
</dbReference>
<dbReference type="GO" id="GO:0046168">
    <property type="term" value="P:glycerol-3-phosphate catabolic process"/>
    <property type="evidence" value="ECO:0007669"/>
    <property type="project" value="InterPro"/>
</dbReference>
<dbReference type="GO" id="GO:0006072">
    <property type="term" value="P:glycerol-3-phosphate metabolic process"/>
    <property type="evidence" value="ECO:0000318"/>
    <property type="project" value="GO_Central"/>
</dbReference>
<dbReference type="GO" id="GO:0046474">
    <property type="term" value="P:glycerophospholipid biosynthetic process"/>
    <property type="evidence" value="ECO:0000318"/>
    <property type="project" value="GO_Central"/>
</dbReference>
<dbReference type="FunFam" id="1.10.1040.10:FF:000001">
    <property type="entry name" value="Glycerol-3-phosphate dehydrogenase [NAD(P)+]"/>
    <property type="match status" value="1"/>
</dbReference>
<dbReference type="FunFam" id="3.40.50.720:FF:000019">
    <property type="entry name" value="Glycerol-3-phosphate dehydrogenase [NAD(P)+]"/>
    <property type="match status" value="1"/>
</dbReference>
<dbReference type="Gene3D" id="1.10.1040.10">
    <property type="entry name" value="N-(1-d-carboxylethyl)-l-norvaline Dehydrogenase, domain 2"/>
    <property type="match status" value="1"/>
</dbReference>
<dbReference type="Gene3D" id="3.40.50.720">
    <property type="entry name" value="NAD(P)-binding Rossmann-like Domain"/>
    <property type="match status" value="1"/>
</dbReference>
<dbReference type="HAMAP" id="MF_00394">
    <property type="entry name" value="NAD_Glyc3P_dehydrog"/>
    <property type="match status" value="1"/>
</dbReference>
<dbReference type="InterPro" id="IPR008927">
    <property type="entry name" value="6-PGluconate_DH-like_C_sf"/>
</dbReference>
<dbReference type="InterPro" id="IPR013328">
    <property type="entry name" value="6PGD_dom2"/>
</dbReference>
<dbReference type="InterPro" id="IPR006168">
    <property type="entry name" value="G3P_DH_NAD-dep"/>
</dbReference>
<dbReference type="InterPro" id="IPR006109">
    <property type="entry name" value="G3P_DH_NAD-dep_C"/>
</dbReference>
<dbReference type="InterPro" id="IPR011128">
    <property type="entry name" value="G3P_DH_NAD-dep_N"/>
</dbReference>
<dbReference type="InterPro" id="IPR036291">
    <property type="entry name" value="NAD(P)-bd_dom_sf"/>
</dbReference>
<dbReference type="NCBIfam" id="NF000939">
    <property type="entry name" value="PRK00094.1-1"/>
    <property type="match status" value="1"/>
</dbReference>
<dbReference type="NCBIfam" id="NF000940">
    <property type="entry name" value="PRK00094.1-2"/>
    <property type="match status" value="1"/>
</dbReference>
<dbReference type="NCBIfam" id="NF000942">
    <property type="entry name" value="PRK00094.1-4"/>
    <property type="match status" value="1"/>
</dbReference>
<dbReference type="PANTHER" id="PTHR11728">
    <property type="entry name" value="GLYCEROL-3-PHOSPHATE DEHYDROGENASE"/>
    <property type="match status" value="1"/>
</dbReference>
<dbReference type="PANTHER" id="PTHR11728:SF1">
    <property type="entry name" value="GLYCEROL-3-PHOSPHATE DEHYDROGENASE [NAD(+)] 2, CHLOROPLASTIC"/>
    <property type="match status" value="1"/>
</dbReference>
<dbReference type="Pfam" id="PF07479">
    <property type="entry name" value="NAD_Gly3P_dh_C"/>
    <property type="match status" value="1"/>
</dbReference>
<dbReference type="Pfam" id="PF01210">
    <property type="entry name" value="NAD_Gly3P_dh_N"/>
    <property type="match status" value="1"/>
</dbReference>
<dbReference type="PIRSF" id="PIRSF000114">
    <property type="entry name" value="Glycerol-3-P_dh"/>
    <property type="match status" value="1"/>
</dbReference>
<dbReference type="PRINTS" id="PR00077">
    <property type="entry name" value="GPDHDRGNASE"/>
</dbReference>
<dbReference type="SUPFAM" id="SSF48179">
    <property type="entry name" value="6-phosphogluconate dehydrogenase C-terminal domain-like"/>
    <property type="match status" value="1"/>
</dbReference>
<dbReference type="SUPFAM" id="SSF51735">
    <property type="entry name" value="NAD(P)-binding Rossmann-fold domains"/>
    <property type="match status" value="1"/>
</dbReference>
<dbReference type="PROSITE" id="PS00957">
    <property type="entry name" value="NAD_G3PDH"/>
    <property type="match status" value="1"/>
</dbReference>
<organism>
    <name type="scientific">Yersinia pestis</name>
    <dbReference type="NCBI Taxonomy" id="632"/>
    <lineage>
        <taxon>Bacteria</taxon>
        <taxon>Pseudomonadati</taxon>
        <taxon>Pseudomonadota</taxon>
        <taxon>Gammaproteobacteria</taxon>
        <taxon>Enterobacterales</taxon>
        <taxon>Yersiniaceae</taxon>
        <taxon>Yersinia</taxon>
    </lineage>
</organism>
<sequence length="339" mass="36194">MNTNPASMAVIGAGSYGTALAITLARNGHQVVLWGHDPKHIQQLQQDRCNRAFLPDAAFPDTLRLETDLACALAASRDVLVVVPSHVFGAVLHQLKPHLRKDARIVWATKGLEAETGRLLQDVAREVLGEAIPLAVISGPTFAKELAAGLPTAIALASTDVQFSEDLQQLLHCGKSFRVYSNPDFIGVQLGGAVKNVIAIGAGMSDGIGFGANARTALITRGLAEMTRLGTALGADPSTFMGMAGLGDLVLTCTDNQSRNRRFGIMLGQGLGVKEAQDNIGQVVEGYRNTKEVLALAQRHGVEMPITEQIYQVLYCHKNAREAALTLLGRTKKDEKIGI</sequence>
<feature type="chain" id="PRO_0000138065" description="Glycerol-3-phosphate dehydrogenase [NAD(P)+]">
    <location>
        <begin position="1"/>
        <end position="339"/>
    </location>
</feature>
<feature type="active site" description="Proton acceptor" evidence="1">
    <location>
        <position position="195"/>
    </location>
</feature>
<feature type="binding site" evidence="1">
    <location>
        <position position="15"/>
    </location>
    <ligand>
        <name>NADPH</name>
        <dbReference type="ChEBI" id="CHEBI:57783"/>
    </ligand>
</feature>
<feature type="binding site" evidence="1">
    <location>
        <position position="16"/>
    </location>
    <ligand>
        <name>NADPH</name>
        <dbReference type="ChEBI" id="CHEBI:57783"/>
    </ligand>
</feature>
<feature type="binding site" evidence="1">
    <location>
        <position position="36"/>
    </location>
    <ligand>
        <name>NADPH</name>
        <dbReference type="ChEBI" id="CHEBI:57783"/>
    </ligand>
</feature>
<feature type="binding site" evidence="1">
    <location>
        <position position="110"/>
    </location>
    <ligand>
        <name>NADPH</name>
        <dbReference type="ChEBI" id="CHEBI:57783"/>
    </ligand>
</feature>
<feature type="binding site" evidence="1">
    <location>
        <position position="110"/>
    </location>
    <ligand>
        <name>sn-glycerol 3-phosphate</name>
        <dbReference type="ChEBI" id="CHEBI:57597"/>
    </ligand>
</feature>
<feature type="binding site" evidence="1">
    <location>
        <position position="139"/>
    </location>
    <ligand>
        <name>sn-glycerol 3-phosphate</name>
        <dbReference type="ChEBI" id="CHEBI:57597"/>
    </ligand>
</feature>
<feature type="binding site" evidence="1">
    <location>
        <position position="141"/>
    </location>
    <ligand>
        <name>sn-glycerol 3-phosphate</name>
        <dbReference type="ChEBI" id="CHEBI:57597"/>
    </ligand>
</feature>
<feature type="binding site" evidence="1">
    <location>
        <position position="143"/>
    </location>
    <ligand>
        <name>NADPH</name>
        <dbReference type="ChEBI" id="CHEBI:57783"/>
    </ligand>
</feature>
<feature type="binding site" evidence="1">
    <location>
        <position position="195"/>
    </location>
    <ligand>
        <name>sn-glycerol 3-phosphate</name>
        <dbReference type="ChEBI" id="CHEBI:57597"/>
    </ligand>
</feature>
<feature type="binding site" evidence="1">
    <location>
        <position position="248"/>
    </location>
    <ligand>
        <name>sn-glycerol 3-phosphate</name>
        <dbReference type="ChEBI" id="CHEBI:57597"/>
    </ligand>
</feature>
<feature type="binding site" evidence="1">
    <location>
        <position position="258"/>
    </location>
    <ligand>
        <name>sn-glycerol 3-phosphate</name>
        <dbReference type="ChEBI" id="CHEBI:57597"/>
    </ligand>
</feature>
<feature type="binding site" evidence="1">
    <location>
        <position position="259"/>
    </location>
    <ligand>
        <name>NADPH</name>
        <dbReference type="ChEBI" id="CHEBI:57783"/>
    </ligand>
</feature>
<feature type="binding site" evidence="1">
    <location>
        <position position="259"/>
    </location>
    <ligand>
        <name>sn-glycerol 3-phosphate</name>
        <dbReference type="ChEBI" id="CHEBI:57597"/>
    </ligand>
</feature>
<feature type="binding site" evidence="1">
    <location>
        <position position="260"/>
    </location>
    <ligand>
        <name>sn-glycerol 3-phosphate</name>
        <dbReference type="ChEBI" id="CHEBI:57597"/>
    </ligand>
</feature>
<feature type="binding site" evidence="1">
    <location>
        <position position="283"/>
    </location>
    <ligand>
        <name>NADPH</name>
        <dbReference type="ChEBI" id="CHEBI:57783"/>
    </ligand>
</feature>
<feature type="binding site" evidence="1">
    <location>
        <position position="285"/>
    </location>
    <ligand>
        <name>NADPH</name>
        <dbReference type="ChEBI" id="CHEBI:57783"/>
    </ligand>
</feature>
<accession>Q8ZJM6</accession>
<accession>Q0WKM6</accession>
<evidence type="ECO:0000255" key="1">
    <source>
        <dbReference type="HAMAP-Rule" id="MF_00394"/>
    </source>
</evidence>